<organism>
    <name type="scientific">Homo sapiens</name>
    <name type="common">Human</name>
    <dbReference type="NCBI Taxonomy" id="9606"/>
    <lineage>
        <taxon>Eukaryota</taxon>
        <taxon>Metazoa</taxon>
        <taxon>Chordata</taxon>
        <taxon>Craniata</taxon>
        <taxon>Vertebrata</taxon>
        <taxon>Euteleostomi</taxon>
        <taxon>Mammalia</taxon>
        <taxon>Eutheria</taxon>
        <taxon>Euarchontoglires</taxon>
        <taxon>Primates</taxon>
        <taxon>Haplorrhini</taxon>
        <taxon>Catarrhini</taxon>
        <taxon>Hominidae</taxon>
        <taxon>Homo</taxon>
    </lineage>
</organism>
<comment type="function">
    <text evidence="1">Plays a key role in reinforcing the integrity of the central element of the synaptonemal complex (SC) thereby stabilizing SC, ensuring progression of meiotic prophase I in male and female germ cells (By similarity). Promotes homologous recombination and crossing-over in meiotic prophase I via its association with SHOC1 (By similarity). Required for the localization of TEX11 and MSH4 to recombination intermediates (By similarity).</text>
</comment>
<comment type="subunit">
    <text evidence="1">Homooligomer (By similarity). Interacts with SHOC, SYCP1 and SYCE3 (By similarity).</text>
</comment>
<comment type="subcellular location">
    <subcellularLocation>
        <location evidence="1">Chromosome</location>
    </subcellularLocation>
</comment>
<name>SPO16_HUMAN</name>
<sequence length="180" mass="20418">MAESGKEKIKWTTTIIISSSLKSYEVATALENRSHKVRYSDSVENGSIIFSLSGVAFLLMDTKECLLSTEEIFLAKIEKFINIHQNSFLVLSAALHGPEEWKLMFRIQQRFLGCNLRILPVHNTVNAINLMCTIAKTTSKPYIDSICYRMITAKAYIIEQSPVWKTLQKIKLNSDSVNPN</sequence>
<proteinExistence type="evidence at transcript level"/>
<evidence type="ECO:0000250" key="1">
    <source>
        <dbReference type="UniProtKB" id="Q3KQP7"/>
    </source>
</evidence>
<accession>Q5VVC0</accession>
<accession>Q5VVC4</accession>
<keyword id="KW-0158">Chromosome</keyword>
<keyword id="KW-0469">Meiosis</keyword>
<keyword id="KW-1185">Reference proteome</keyword>
<reference key="1">
    <citation type="journal article" date="2006" name="Nature">
        <title>The DNA sequence and biological annotation of human chromosome 1.</title>
        <authorList>
            <person name="Gregory S.G."/>
            <person name="Barlow K.F."/>
            <person name="McLay K.E."/>
            <person name="Kaul R."/>
            <person name="Swarbreck D."/>
            <person name="Dunham A."/>
            <person name="Scott C.E."/>
            <person name="Howe K.L."/>
            <person name="Woodfine K."/>
            <person name="Spencer C.C.A."/>
            <person name="Jones M.C."/>
            <person name="Gillson C."/>
            <person name="Searle S."/>
            <person name="Zhou Y."/>
            <person name="Kokocinski F."/>
            <person name="McDonald L."/>
            <person name="Evans R."/>
            <person name="Phillips K."/>
            <person name="Atkinson A."/>
            <person name="Cooper R."/>
            <person name="Jones C."/>
            <person name="Hall R.E."/>
            <person name="Andrews T.D."/>
            <person name="Lloyd C."/>
            <person name="Ainscough R."/>
            <person name="Almeida J.P."/>
            <person name="Ambrose K.D."/>
            <person name="Anderson F."/>
            <person name="Andrew R.W."/>
            <person name="Ashwell R.I.S."/>
            <person name="Aubin K."/>
            <person name="Babbage A.K."/>
            <person name="Bagguley C.L."/>
            <person name="Bailey J."/>
            <person name="Beasley H."/>
            <person name="Bethel G."/>
            <person name="Bird C.P."/>
            <person name="Bray-Allen S."/>
            <person name="Brown J.Y."/>
            <person name="Brown A.J."/>
            <person name="Buckley D."/>
            <person name="Burton J."/>
            <person name="Bye J."/>
            <person name="Carder C."/>
            <person name="Chapman J.C."/>
            <person name="Clark S.Y."/>
            <person name="Clarke G."/>
            <person name="Clee C."/>
            <person name="Cobley V."/>
            <person name="Collier R.E."/>
            <person name="Corby N."/>
            <person name="Coville G.J."/>
            <person name="Davies J."/>
            <person name="Deadman R."/>
            <person name="Dunn M."/>
            <person name="Earthrowl M."/>
            <person name="Ellington A.G."/>
            <person name="Errington H."/>
            <person name="Frankish A."/>
            <person name="Frankland J."/>
            <person name="French L."/>
            <person name="Garner P."/>
            <person name="Garnett J."/>
            <person name="Gay L."/>
            <person name="Ghori M.R.J."/>
            <person name="Gibson R."/>
            <person name="Gilby L.M."/>
            <person name="Gillett W."/>
            <person name="Glithero R.J."/>
            <person name="Grafham D.V."/>
            <person name="Griffiths C."/>
            <person name="Griffiths-Jones S."/>
            <person name="Grocock R."/>
            <person name="Hammond S."/>
            <person name="Harrison E.S.I."/>
            <person name="Hart E."/>
            <person name="Haugen E."/>
            <person name="Heath P.D."/>
            <person name="Holmes S."/>
            <person name="Holt K."/>
            <person name="Howden P.J."/>
            <person name="Hunt A.R."/>
            <person name="Hunt S.E."/>
            <person name="Hunter G."/>
            <person name="Isherwood J."/>
            <person name="James R."/>
            <person name="Johnson C."/>
            <person name="Johnson D."/>
            <person name="Joy A."/>
            <person name="Kay M."/>
            <person name="Kershaw J.K."/>
            <person name="Kibukawa M."/>
            <person name="Kimberley A.M."/>
            <person name="King A."/>
            <person name="Knights A.J."/>
            <person name="Lad H."/>
            <person name="Laird G."/>
            <person name="Lawlor S."/>
            <person name="Leongamornlert D.A."/>
            <person name="Lloyd D.M."/>
            <person name="Loveland J."/>
            <person name="Lovell J."/>
            <person name="Lush M.J."/>
            <person name="Lyne R."/>
            <person name="Martin S."/>
            <person name="Mashreghi-Mohammadi M."/>
            <person name="Matthews L."/>
            <person name="Matthews N.S.W."/>
            <person name="McLaren S."/>
            <person name="Milne S."/>
            <person name="Mistry S."/>
            <person name="Moore M.J.F."/>
            <person name="Nickerson T."/>
            <person name="O'Dell C.N."/>
            <person name="Oliver K."/>
            <person name="Palmeiri A."/>
            <person name="Palmer S.A."/>
            <person name="Parker A."/>
            <person name="Patel D."/>
            <person name="Pearce A.V."/>
            <person name="Peck A.I."/>
            <person name="Pelan S."/>
            <person name="Phelps K."/>
            <person name="Phillimore B.J."/>
            <person name="Plumb R."/>
            <person name="Rajan J."/>
            <person name="Raymond C."/>
            <person name="Rouse G."/>
            <person name="Saenphimmachak C."/>
            <person name="Sehra H.K."/>
            <person name="Sheridan E."/>
            <person name="Shownkeen R."/>
            <person name="Sims S."/>
            <person name="Skuce C.D."/>
            <person name="Smith M."/>
            <person name="Steward C."/>
            <person name="Subramanian S."/>
            <person name="Sycamore N."/>
            <person name="Tracey A."/>
            <person name="Tromans A."/>
            <person name="Van Helmond Z."/>
            <person name="Wall M."/>
            <person name="Wallis J.M."/>
            <person name="White S."/>
            <person name="Whitehead S.L."/>
            <person name="Wilkinson J.E."/>
            <person name="Willey D.L."/>
            <person name="Williams H."/>
            <person name="Wilming L."/>
            <person name="Wray P.W."/>
            <person name="Wu Z."/>
            <person name="Coulson A."/>
            <person name="Vaudin M."/>
            <person name="Sulston J.E."/>
            <person name="Durbin R.M."/>
            <person name="Hubbard T."/>
            <person name="Wooster R."/>
            <person name="Dunham I."/>
            <person name="Carter N.P."/>
            <person name="McVean G."/>
            <person name="Ross M.T."/>
            <person name="Harrow J."/>
            <person name="Olson M.V."/>
            <person name="Beck S."/>
            <person name="Rogers J."/>
            <person name="Bentley D.R."/>
        </authorList>
    </citation>
    <scope>NUCLEOTIDE SEQUENCE [LARGE SCALE GENOMIC DNA]</scope>
</reference>
<reference key="2">
    <citation type="journal article" date="2004" name="Genome Res.">
        <title>The status, quality, and expansion of the NIH full-length cDNA project: the Mammalian Gene Collection (MGC).</title>
        <authorList>
            <consortium name="The MGC Project Team"/>
        </authorList>
    </citation>
    <scope>NUCLEOTIDE SEQUENCE [LARGE SCALE MRNA]</scope>
</reference>
<dbReference type="EMBL" id="AL451010">
    <property type="status" value="NOT_ANNOTATED_CDS"/>
    <property type="molecule type" value="Genomic_DNA"/>
</dbReference>
<dbReference type="EMBL" id="BC130499">
    <property type="protein sequence ID" value="AAI30500.1"/>
    <property type="molecule type" value="mRNA"/>
</dbReference>
<dbReference type="CCDS" id="CCDS30772.1"/>
<dbReference type="RefSeq" id="NP_001012425.1">
    <property type="nucleotide sequence ID" value="NM_001012425.1"/>
</dbReference>
<dbReference type="RefSeq" id="XP_011539749.1">
    <property type="nucleotide sequence ID" value="XM_011541447.2"/>
</dbReference>
<dbReference type="SMR" id="Q5VVC0"/>
<dbReference type="BioGRID" id="132792">
    <property type="interactions" value="7"/>
</dbReference>
<dbReference type="FunCoup" id="Q5VVC0">
    <property type="interactions" value="16"/>
</dbReference>
<dbReference type="IntAct" id="Q5VVC0">
    <property type="interactions" value="7"/>
</dbReference>
<dbReference type="STRING" id="9606.ENSP00000359401"/>
<dbReference type="GlyGen" id="Q5VVC0">
    <property type="glycosylation" value="1 site, 1 O-linked glycan (1 site)"/>
</dbReference>
<dbReference type="iPTMnet" id="Q5VVC0"/>
<dbReference type="PhosphoSitePlus" id="Q5VVC0"/>
<dbReference type="BioMuta" id="C1orf146"/>
<dbReference type="jPOST" id="Q5VVC0"/>
<dbReference type="PaxDb" id="9606-ENSP00000359401"/>
<dbReference type="ProteomicsDB" id="65455"/>
<dbReference type="Antibodypedia" id="53285">
    <property type="antibodies" value="62 antibodies from 13 providers"/>
</dbReference>
<dbReference type="DNASU" id="388649"/>
<dbReference type="Ensembl" id="ENST00000370375.8">
    <property type="protein sequence ID" value="ENSP00000359401.3"/>
    <property type="gene ID" value="ENSG00000203910.9"/>
</dbReference>
<dbReference type="GeneID" id="388649"/>
<dbReference type="KEGG" id="hsa:388649"/>
<dbReference type="MANE-Select" id="ENST00000370375.8">
    <property type="protein sequence ID" value="ENSP00000359401.3"/>
    <property type="RefSeq nucleotide sequence ID" value="NM_001012425.2"/>
    <property type="RefSeq protein sequence ID" value="NP_001012425.1"/>
</dbReference>
<dbReference type="UCSC" id="uc001doq.4">
    <property type="organism name" value="human"/>
</dbReference>
<dbReference type="AGR" id="HGNC:24032"/>
<dbReference type="CTD" id="388649"/>
<dbReference type="GeneCards" id="C1orf146"/>
<dbReference type="HGNC" id="HGNC:24032">
    <property type="gene designation" value="C1orf146"/>
</dbReference>
<dbReference type="HPA" id="ENSG00000203910">
    <property type="expression patterns" value="Group enriched (retina, testis)"/>
</dbReference>
<dbReference type="MIM" id="618968">
    <property type="type" value="gene"/>
</dbReference>
<dbReference type="neXtProt" id="NX_Q5VVC0"/>
<dbReference type="PharmGKB" id="PA142672463"/>
<dbReference type="VEuPathDB" id="HostDB:ENSG00000203910"/>
<dbReference type="eggNOG" id="ENOG502S1KQ">
    <property type="taxonomic scope" value="Eukaryota"/>
</dbReference>
<dbReference type="GeneTree" id="ENSGT00390000008285"/>
<dbReference type="HOGENOM" id="CLU_097019_0_0_1"/>
<dbReference type="InParanoid" id="Q5VVC0"/>
<dbReference type="OMA" id="QNHDTCR"/>
<dbReference type="OrthoDB" id="6149480at2759"/>
<dbReference type="PAN-GO" id="Q5VVC0">
    <property type="GO annotations" value="3 GO annotations based on evolutionary models"/>
</dbReference>
<dbReference type="PhylomeDB" id="Q5VVC0"/>
<dbReference type="TreeFam" id="TF333385"/>
<dbReference type="PathwayCommons" id="Q5VVC0"/>
<dbReference type="BioGRID-ORCS" id="388649">
    <property type="hits" value="17 hits in 1102 CRISPR screens"/>
</dbReference>
<dbReference type="ChiTaRS" id="C1orf146">
    <property type="organism name" value="human"/>
</dbReference>
<dbReference type="GenomeRNAi" id="388649"/>
<dbReference type="Pharos" id="Q5VVC0">
    <property type="development level" value="Tdark"/>
</dbReference>
<dbReference type="PRO" id="PR:Q5VVC0"/>
<dbReference type="Proteomes" id="UP000005640">
    <property type="component" value="Chromosome 1"/>
</dbReference>
<dbReference type="RNAct" id="Q5VVC0">
    <property type="molecule type" value="protein"/>
</dbReference>
<dbReference type="Bgee" id="ENSG00000203910">
    <property type="expression patterns" value="Expressed in male germ line stem cell (sensu Vertebrata) in testis and 82 other cell types or tissues"/>
</dbReference>
<dbReference type="ExpressionAtlas" id="Q5VVC0">
    <property type="expression patterns" value="baseline and differential"/>
</dbReference>
<dbReference type="GO" id="GO:0005694">
    <property type="term" value="C:chromosome"/>
    <property type="evidence" value="ECO:0000250"/>
    <property type="project" value="UniProtKB"/>
</dbReference>
<dbReference type="GO" id="GO:0007131">
    <property type="term" value="P:reciprocal meiotic recombination"/>
    <property type="evidence" value="ECO:0000250"/>
    <property type="project" value="UniProtKB"/>
</dbReference>
<dbReference type="GO" id="GO:0007130">
    <property type="term" value="P:synaptonemal complex assembly"/>
    <property type="evidence" value="ECO:0000250"/>
    <property type="project" value="UniProtKB"/>
</dbReference>
<dbReference type="InterPro" id="IPR027857">
    <property type="entry name" value="SCRE"/>
</dbReference>
<dbReference type="PANTHER" id="PTHR31408">
    <property type="entry name" value="HYPOTHETICAL PROTEIN LOC689986"/>
    <property type="match status" value="1"/>
</dbReference>
<dbReference type="PANTHER" id="PTHR31408:SF2">
    <property type="entry name" value="PROTEIN SPO16 HOMOLOG"/>
    <property type="match status" value="1"/>
</dbReference>
<dbReference type="Pfam" id="PF15162">
    <property type="entry name" value="SCRE"/>
    <property type="match status" value="1"/>
</dbReference>
<gene>
    <name evidence="1" type="primary">SPO16</name>
    <name type="synonym">C1orf146</name>
    <name evidence="1" type="synonym">SCRE</name>
</gene>
<feature type="chain" id="PRO_0000299020" description="Protein SPO16 homolog">
    <location>
        <begin position="1"/>
        <end position="180"/>
    </location>
</feature>
<protein>
    <recommendedName>
        <fullName evidence="1">Protein SPO16 homolog</fullName>
    </recommendedName>
    <alternativeName>
        <fullName evidence="1">Synaptonemal complex reinforcing element</fullName>
    </alternativeName>
</protein>